<name>AMPP1_COLGM</name>
<reference key="1">
    <citation type="journal article" date="2012" name="Nat. Genet.">
        <title>Lifestyle transitions in plant pathogenic Colletotrichum fungi deciphered by genome and transcriptome analyses.</title>
        <authorList>
            <person name="O'Connell R.J."/>
            <person name="Thon M.R."/>
            <person name="Hacquard S."/>
            <person name="Amyotte S.G."/>
            <person name="Kleemann J."/>
            <person name="Torres M.F."/>
            <person name="Damm U."/>
            <person name="Buiate E.A."/>
            <person name="Epstein L."/>
            <person name="Alkan N."/>
            <person name="Altmueller J."/>
            <person name="Alvarado-Balderrama L."/>
            <person name="Bauser C.A."/>
            <person name="Becker C."/>
            <person name="Birren B.W."/>
            <person name="Chen Z."/>
            <person name="Choi J."/>
            <person name="Crouch J.A."/>
            <person name="Duvick J.P."/>
            <person name="Farman M.A."/>
            <person name="Gan P."/>
            <person name="Heiman D."/>
            <person name="Henrissat B."/>
            <person name="Howard R.J."/>
            <person name="Kabbage M."/>
            <person name="Koch C."/>
            <person name="Kracher B."/>
            <person name="Kubo Y."/>
            <person name="Law A.D."/>
            <person name="Lebrun M.-H."/>
            <person name="Lee Y.-H."/>
            <person name="Miyara I."/>
            <person name="Moore N."/>
            <person name="Neumann U."/>
            <person name="Nordstroem K."/>
            <person name="Panaccione D.G."/>
            <person name="Panstruga R."/>
            <person name="Place M."/>
            <person name="Proctor R.H."/>
            <person name="Prusky D."/>
            <person name="Rech G."/>
            <person name="Reinhardt R."/>
            <person name="Rollins J.A."/>
            <person name="Rounsley S."/>
            <person name="Schardl C.L."/>
            <person name="Schwartz D.C."/>
            <person name="Shenoy N."/>
            <person name="Shirasu K."/>
            <person name="Sikhakolli U.R."/>
            <person name="Stueber K."/>
            <person name="Sukno S.A."/>
            <person name="Sweigard J.A."/>
            <person name="Takano Y."/>
            <person name="Takahara H."/>
            <person name="Trail F."/>
            <person name="van der Does H.C."/>
            <person name="Voll L.M."/>
            <person name="Will I."/>
            <person name="Young S."/>
            <person name="Zeng Q."/>
            <person name="Zhang J."/>
            <person name="Zhou S."/>
            <person name="Dickman M.B."/>
            <person name="Schulze-Lefert P."/>
            <person name="Ver Loren van Themaat E."/>
            <person name="Ma L.-J."/>
            <person name="Vaillancourt L.J."/>
        </authorList>
    </citation>
    <scope>NUCLEOTIDE SEQUENCE [LARGE SCALE GENOMIC DNA]</scope>
    <source>
        <strain>M1.001 / M2 / FGSC 10212</strain>
    </source>
</reference>
<dbReference type="EC" id="3.4.11.9"/>
<dbReference type="EMBL" id="GG697341">
    <property type="protein sequence ID" value="EFQ28678.1"/>
    <property type="molecule type" value="Genomic_DNA"/>
</dbReference>
<dbReference type="RefSeq" id="XP_008092698.1">
    <property type="nucleotide sequence ID" value="XM_008094507.1"/>
</dbReference>
<dbReference type="SMR" id="E3QCU0"/>
<dbReference type="STRING" id="645133.E3QCU0"/>
<dbReference type="EnsemblFungi" id="EFQ28678">
    <property type="protein sequence ID" value="EFQ28678"/>
    <property type="gene ID" value="GLRG_03822"/>
</dbReference>
<dbReference type="GeneID" id="24409187"/>
<dbReference type="VEuPathDB" id="FungiDB:GLRG_03822"/>
<dbReference type="eggNOG" id="KOG2413">
    <property type="taxonomic scope" value="Eukaryota"/>
</dbReference>
<dbReference type="HOGENOM" id="CLU_011781_2_2_1"/>
<dbReference type="OrthoDB" id="9995434at2759"/>
<dbReference type="Proteomes" id="UP000008782">
    <property type="component" value="Unassembled WGS sequence"/>
</dbReference>
<dbReference type="GO" id="GO:0005737">
    <property type="term" value="C:cytoplasm"/>
    <property type="evidence" value="ECO:0007669"/>
    <property type="project" value="UniProtKB-ARBA"/>
</dbReference>
<dbReference type="GO" id="GO:0046872">
    <property type="term" value="F:metal ion binding"/>
    <property type="evidence" value="ECO:0007669"/>
    <property type="project" value="UniProtKB-KW"/>
</dbReference>
<dbReference type="GO" id="GO:0070006">
    <property type="term" value="F:metalloaminopeptidase activity"/>
    <property type="evidence" value="ECO:0007669"/>
    <property type="project" value="InterPro"/>
</dbReference>
<dbReference type="GO" id="GO:0006508">
    <property type="term" value="P:proteolysis"/>
    <property type="evidence" value="ECO:0007669"/>
    <property type="project" value="UniProtKB-KW"/>
</dbReference>
<dbReference type="CDD" id="cd01085">
    <property type="entry name" value="APP"/>
    <property type="match status" value="1"/>
</dbReference>
<dbReference type="FunFam" id="3.40.350.10:FF:000010">
    <property type="entry name" value="Probable Xaa-Pro aminopeptidase P"/>
    <property type="match status" value="1"/>
</dbReference>
<dbReference type="FunFam" id="3.90.230.10:FF:000007">
    <property type="entry name" value="Xaa-Pro aminopeptidase P"/>
    <property type="match status" value="1"/>
</dbReference>
<dbReference type="FunFam" id="3.40.350.10:FF:000003">
    <property type="entry name" value="Xaa-pro aminopeptidase P"/>
    <property type="match status" value="1"/>
</dbReference>
<dbReference type="Gene3D" id="3.90.230.10">
    <property type="entry name" value="Creatinase/methionine aminopeptidase superfamily"/>
    <property type="match status" value="1"/>
</dbReference>
<dbReference type="Gene3D" id="3.40.350.10">
    <property type="entry name" value="Creatinase/prolidase N-terminal domain"/>
    <property type="match status" value="2"/>
</dbReference>
<dbReference type="InterPro" id="IPR029149">
    <property type="entry name" value="Creatin/AminoP/Spt16_N"/>
</dbReference>
<dbReference type="InterPro" id="IPR036005">
    <property type="entry name" value="Creatinase/aminopeptidase-like"/>
</dbReference>
<dbReference type="InterPro" id="IPR000587">
    <property type="entry name" value="Creatinase_N"/>
</dbReference>
<dbReference type="InterPro" id="IPR000994">
    <property type="entry name" value="Pept_M24"/>
</dbReference>
<dbReference type="InterPro" id="IPR033740">
    <property type="entry name" value="Pept_M24B"/>
</dbReference>
<dbReference type="InterPro" id="IPR032416">
    <property type="entry name" value="Peptidase_M24_C"/>
</dbReference>
<dbReference type="InterPro" id="IPR001131">
    <property type="entry name" value="Peptidase_M24B_aminopep-P_CS"/>
</dbReference>
<dbReference type="InterPro" id="IPR050422">
    <property type="entry name" value="X-Pro_aminopeptidase_P"/>
</dbReference>
<dbReference type="PANTHER" id="PTHR43763">
    <property type="entry name" value="XAA-PRO AMINOPEPTIDASE 1"/>
    <property type="match status" value="1"/>
</dbReference>
<dbReference type="PANTHER" id="PTHR43763:SF6">
    <property type="entry name" value="XAA-PRO AMINOPEPTIDASE 1"/>
    <property type="match status" value="1"/>
</dbReference>
<dbReference type="Pfam" id="PF01321">
    <property type="entry name" value="Creatinase_N"/>
    <property type="match status" value="1"/>
</dbReference>
<dbReference type="Pfam" id="PF16189">
    <property type="entry name" value="Creatinase_N_2"/>
    <property type="match status" value="1"/>
</dbReference>
<dbReference type="Pfam" id="PF00557">
    <property type="entry name" value="Peptidase_M24"/>
    <property type="match status" value="1"/>
</dbReference>
<dbReference type="Pfam" id="PF16188">
    <property type="entry name" value="Peptidase_M24_C"/>
    <property type="match status" value="1"/>
</dbReference>
<dbReference type="SUPFAM" id="SSF55920">
    <property type="entry name" value="Creatinase/aminopeptidase"/>
    <property type="match status" value="1"/>
</dbReference>
<dbReference type="SUPFAM" id="SSF53092">
    <property type="entry name" value="Creatinase/prolidase N-terminal domain"/>
    <property type="match status" value="1"/>
</dbReference>
<dbReference type="PROSITE" id="PS00491">
    <property type="entry name" value="PROLINE_PEPTIDASE"/>
    <property type="match status" value="1"/>
</dbReference>
<feature type="chain" id="PRO_0000411789" description="Probable Xaa-Pro aminopeptidase P">
    <location>
        <begin position="1"/>
        <end position="617"/>
    </location>
</feature>
<feature type="binding site" evidence="1">
    <location>
        <position position="414"/>
    </location>
    <ligand>
        <name>Mn(2+)</name>
        <dbReference type="ChEBI" id="CHEBI:29035"/>
        <label>2</label>
    </ligand>
</feature>
<feature type="binding site" evidence="1">
    <location>
        <position position="425"/>
    </location>
    <ligand>
        <name>Mn(2+)</name>
        <dbReference type="ChEBI" id="CHEBI:29035"/>
        <label>1</label>
    </ligand>
</feature>
<feature type="binding site" evidence="1">
    <location>
        <position position="425"/>
    </location>
    <ligand>
        <name>Mn(2+)</name>
        <dbReference type="ChEBI" id="CHEBI:29035"/>
        <label>2</label>
    </ligand>
</feature>
<feature type="binding site" evidence="1">
    <location>
        <position position="523"/>
    </location>
    <ligand>
        <name>Mn(2+)</name>
        <dbReference type="ChEBI" id="CHEBI:29035"/>
        <label>1</label>
    </ligand>
</feature>
<feature type="binding site" evidence="1">
    <location>
        <position position="537"/>
    </location>
    <ligand>
        <name>Mn(2+)</name>
        <dbReference type="ChEBI" id="CHEBI:29035"/>
        <label>1</label>
    </ligand>
</feature>
<feature type="binding site" evidence="1">
    <location>
        <position position="537"/>
    </location>
    <ligand>
        <name>Mn(2+)</name>
        <dbReference type="ChEBI" id="CHEBI:29035"/>
        <label>2</label>
    </ligand>
</feature>
<comment type="function">
    <text evidence="1">Catalyzes the removal of a penultimate prolyl residue from the N-termini of peptides.</text>
</comment>
<comment type="catalytic activity">
    <reaction>
        <text>Release of any N-terminal amino acid, including proline, that is linked to proline, even from a dipeptide or tripeptide.</text>
        <dbReference type="EC" id="3.4.11.9"/>
    </reaction>
</comment>
<comment type="cofactor">
    <cofactor evidence="1">
        <name>Mn(2+)</name>
        <dbReference type="ChEBI" id="CHEBI:29035"/>
    </cofactor>
    <text evidence="1">Binds 2 manganese ions per subunit.</text>
</comment>
<comment type="similarity">
    <text evidence="2">Belongs to the peptidase M24B family.</text>
</comment>
<gene>
    <name type="primary">AMPP</name>
    <name type="ORF">GLRG_03822</name>
</gene>
<accession>E3QCU0</accession>
<evidence type="ECO:0000250" key="1"/>
<evidence type="ECO:0000305" key="2"/>
<keyword id="KW-0031">Aminopeptidase</keyword>
<keyword id="KW-0378">Hydrolase</keyword>
<keyword id="KW-0464">Manganese</keyword>
<keyword id="KW-0479">Metal-binding</keyword>
<keyword id="KW-0482">Metalloprotease</keyword>
<keyword id="KW-0645">Protease</keyword>
<keyword id="KW-1185">Reference proteome</keyword>
<protein>
    <recommendedName>
        <fullName>Probable Xaa-Pro aminopeptidase P</fullName>
        <shortName>AMPP</shortName>
        <shortName>Aminopeptidase P</shortName>
        <ecNumber>3.4.11.9</ecNumber>
    </recommendedName>
    <alternativeName>
        <fullName>Aminoacylproline aminopeptidase</fullName>
    </alternativeName>
    <alternativeName>
        <fullName>Prolidase</fullName>
    </alternativeName>
</protein>
<sequence>MERIDTTGRLSRLRELMKERNVDVYVIPSEDSHASEYIAGCDARREFISGFSGSAGCAVVTLDKAALATDGRYFNQASKQLDQNWLLLKQGLQDVPTWQEWSAEQSAGGKVVGVDPELITGSIAKKLTEKVKRSGGSDLVPLDENLVDLVWAEARPARPKNPIKVLPEKFSGKDVKTKLKELRQELDRKNSRAFVVSMLDEIAWLFNLRGDDIPYNPVFFSYAIITSDSATLYVDASKLGEETRAYLADNDVCVKPYDIVFDSINTLRSSDTSCQTTSGVSSKRFMISTKASWALKRSLGGDSQVDEVRSPIGDSKAVKNKSEMAGMRACHIRDGAALIEYFAWLEDQLVAKKVKLDEVQAADKLEQLRSKQKDYVGLSFDTISSTGANAAVIHYKPERGACSIIDPTAIYLCDSGAQYLDGTTDTTRTLHFGQPTEAEKLAYTLVLKGNIALDTAIFPKGTTGFAIDCLARQHLWKEGLDYRHGTGHGVGSYLNVHEGPIGIGTRVQFAEVALAPGNVLSIEPGFYEDGSYGIRIENVAMVTEVKTKHSFGDKPYLGFEHVTMVPYCRNLIEPNLLTAEEKAWLNAHHADILQKTKGYFQDDPLTMTWLARETQPL</sequence>
<proteinExistence type="inferred from homology"/>
<organism>
    <name type="scientific">Colletotrichum graminicola (strain M1.001 / M2 / FGSC 10212)</name>
    <name type="common">Maize anthracnose fungus</name>
    <name type="synonym">Glomerella graminicola</name>
    <dbReference type="NCBI Taxonomy" id="645133"/>
    <lineage>
        <taxon>Eukaryota</taxon>
        <taxon>Fungi</taxon>
        <taxon>Dikarya</taxon>
        <taxon>Ascomycota</taxon>
        <taxon>Pezizomycotina</taxon>
        <taxon>Sordariomycetes</taxon>
        <taxon>Hypocreomycetidae</taxon>
        <taxon>Glomerellales</taxon>
        <taxon>Glomerellaceae</taxon>
        <taxon>Colletotrichum</taxon>
        <taxon>Colletotrichum graminicola species complex</taxon>
    </lineage>
</organism>